<organism>
    <name type="scientific">Human coronavirus 229E</name>
    <name type="common">HCoV-229E</name>
    <dbReference type="NCBI Taxonomy" id="11137"/>
    <lineage>
        <taxon>Viruses</taxon>
        <taxon>Riboviria</taxon>
        <taxon>Orthornavirae</taxon>
        <taxon>Pisuviricota</taxon>
        <taxon>Pisoniviricetes</taxon>
        <taxon>Nidovirales</taxon>
        <taxon>Cornidovirineae</taxon>
        <taxon>Coronaviridae</taxon>
        <taxon>Orthocoronavirinae</taxon>
        <taxon>Alphacoronavirus</taxon>
        <taxon>Duvinacovirus</taxon>
    </lineage>
</organism>
<name>NS4A_CVH22</name>
<reference key="1">
    <citation type="journal article" date="1989" name="Nucleic Acids Res.">
        <title>Nucleotide sequence of the human coronavirus HCV 229E mRNA 4 and mRNA 5 unique regions.</title>
        <authorList>
            <person name="Raabe T."/>
            <person name="Siddell S.G."/>
        </authorList>
    </citation>
    <scope>NUCLEOTIDE SEQUENCE [GENOMIC RNA]</scope>
</reference>
<reference key="2">
    <citation type="journal article" date="1992" name="Virus Res.">
        <title>Sequence analysis of human coronavirus 229E mRNAs 4 and 5: evidence for polymorphism and homology with myelin basic protein.</title>
        <authorList>
            <person name="Jouvenne P."/>
            <person name="Mounir S."/>
            <person name="Stewart J.N."/>
            <person name="Richardson C.D."/>
            <person name="Talbot P.J."/>
        </authorList>
    </citation>
    <scope>NUCLEOTIDE SEQUENCE [GENOMIC RNA]</scope>
    <source>
        <strain>Isolate J22</strain>
    </source>
</reference>
<reference key="3">
    <citation type="journal article" date="2001" name="J. Gen. Virol.">
        <title>Infectious RNA transcribed in vitro from a cDNA copy of the human coronavirus genome cloned in vaccinia virus.</title>
        <authorList>
            <person name="Thiel V."/>
            <person name="Herold J."/>
            <person name="Schelle B."/>
            <person name="Siddell S.G."/>
        </authorList>
    </citation>
    <scope>NUCLEOTIDE SEQUENCE [GENOMIC RNA]</scope>
</reference>
<gene>
    <name type="ORF">4a</name>
</gene>
<sequence length="133" mass="15299">MALGLFTLQLVSAVNQSLSNAKVSAEVSRQVIQDVKDGTVTFNLLAYTLMSLFVVYFALFKARSHRGRAALIVFKILILFVYVPLLYWSQAYIYATLIAVILLGRFFHTAWHCWLYKTWDFIVFNVTTLCYAR</sequence>
<protein>
    <recommendedName>
        <fullName>Non-structural protein 4a</fullName>
        <shortName>ns4a</shortName>
    </recommendedName>
    <alternativeName>
        <fullName>Accessory protein 4a</fullName>
    </alternativeName>
</protein>
<organismHost>
    <name type="scientific">Homo sapiens</name>
    <name type="common">Human</name>
    <dbReference type="NCBI Taxonomy" id="9606"/>
</organismHost>
<feature type="signal peptide" evidence="1">
    <location>
        <begin position="1"/>
        <end position="21"/>
    </location>
</feature>
<feature type="chain" id="PRO_0000106070" description="Non-structural protein 4a">
    <location>
        <begin position="22"/>
        <end position="133"/>
    </location>
</feature>
<feature type="transmembrane region" description="Helical" evidence="1">
    <location>
        <begin position="40"/>
        <end position="60"/>
    </location>
</feature>
<feature type="transmembrane region" description="Helical" evidence="1">
    <location>
        <begin position="69"/>
        <end position="89"/>
    </location>
</feature>
<feature type="transmembrane region" description="Helical" evidence="1">
    <location>
        <begin position="91"/>
        <end position="111"/>
    </location>
</feature>
<feature type="domain" description="CoV 3a-like viroporin TM" evidence="2">
    <location>
        <begin position="34"/>
        <end position="124"/>
    </location>
</feature>
<feature type="sequence variant" description="In strain: Isolate J22.">
    <original>TFNL</original>
    <variation>FSTC</variation>
    <location>
        <begin position="41"/>
        <end position="44"/>
    </location>
</feature>
<feature type="sequence variant" description="In strain: Isolate J22.">
    <location>
        <begin position="45"/>
        <end position="133"/>
    </location>
</feature>
<dbReference type="EMBL" id="X15654">
    <property type="protein sequence ID" value="CAA33682.1"/>
    <property type="molecule type" value="Genomic_RNA"/>
</dbReference>
<dbReference type="EMBL" id="X64942">
    <property type="protein sequence ID" value="CAA46113.1"/>
    <property type="molecule type" value="Genomic_RNA"/>
</dbReference>
<dbReference type="EMBL" id="AF304460">
    <property type="protein sequence ID" value="AAG48593.1"/>
    <property type="molecule type" value="Genomic_RNA"/>
</dbReference>
<dbReference type="PIR" id="A34038">
    <property type="entry name" value="MNIHHC"/>
</dbReference>
<dbReference type="PIR" id="S25708">
    <property type="entry name" value="S25708"/>
</dbReference>
<dbReference type="RefSeq" id="NP_073552.1">
    <property type="nucleotide sequence ID" value="NC_002645.1"/>
</dbReference>
<dbReference type="IntAct" id="P19739">
    <property type="interactions" value="115"/>
</dbReference>
<dbReference type="DNASU" id="918759"/>
<dbReference type="GeneID" id="918759"/>
<dbReference type="KEGG" id="vg:918759"/>
<dbReference type="OrthoDB" id="19204at10239"/>
<dbReference type="Proteomes" id="UP000006716">
    <property type="component" value="Genome"/>
</dbReference>
<dbReference type="GO" id="GO:0033644">
    <property type="term" value="C:host cell membrane"/>
    <property type="evidence" value="ECO:0007669"/>
    <property type="project" value="UniProtKB-SubCell"/>
</dbReference>
<dbReference type="GO" id="GO:0016020">
    <property type="term" value="C:membrane"/>
    <property type="evidence" value="ECO:0007669"/>
    <property type="project" value="UniProtKB-KW"/>
</dbReference>
<dbReference type="InterPro" id="IPR046445">
    <property type="entry name" value="a/bCoV_VIROPORIN_3A-like_TM"/>
</dbReference>
<dbReference type="InterPro" id="IPR004293">
    <property type="entry name" value="Coronavirus_Orf3a/b"/>
</dbReference>
<dbReference type="Pfam" id="PF03053">
    <property type="entry name" value="Corona_NS3b"/>
    <property type="match status" value="1"/>
</dbReference>
<dbReference type="PROSITE" id="PS51966">
    <property type="entry name" value="COV_VIROPORIN_3A_TM"/>
    <property type="match status" value="1"/>
</dbReference>
<evidence type="ECO:0000255" key="1"/>
<evidence type="ECO:0000255" key="2">
    <source>
        <dbReference type="PROSITE-ProRule" id="PRU01311"/>
    </source>
</evidence>
<evidence type="ECO:0000305" key="3"/>
<comment type="subcellular location">
    <subcellularLocation>
        <location evidence="3">Host membrane</location>
        <topology evidence="3">Multi-pass membrane protein</topology>
    </subcellularLocation>
</comment>
<comment type="similarity">
    <text evidence="3">Belongs to the coronaviruses NS4a protein family.</text>
</comment>
<proteinExistence type="inferred from homology"/>
<accession>P19739</accession>
<accession>Q01160</accession>
<keyword id="KW-1043">Host membrane</keyword>
<keyword id="KW-0472">Membrane</keyword>
<keyword id="KW-1185">Reference proteome</keyword>
<keyword id="KW-0732">Signal</keyword>
<keyword id="KW-0812">Transmembrane</keyword>
<keyword id="KW-1133">Transmembrane helix</keyword>